<comment type="catalytic activity">
    <reaction evidence="1">
        <text>GTP + H2O = 7,8-dihydroneopterin 3'-triphosphate + formate + H(+)</text>
        <dbReference type="Rhea" id="RHEA:17473"/>
        <dbReference type="ChEBI" id="CHEBI:15377"/>
        <dbReference type="ChEBI" id="CHEBI:15378"/>
        <dbReference type="ChEBI" id="CHEBI:15740"/>
        <dbReference type="ChEBI" id="CHEBI:37565"/>
        <dbReference type="ChEBI" id="CHEBI:58462"/>
        <dbReference type="EC" id="3.5.4.16"/>
    </reaction>
</comment>
<comment type="pathway">
    <text evidence="1">Cofactor biosynthesis; 7,8-dihydroneopterin triphosphate biosynthesis; 7,8-dihydroneopterin triphosphate from GTP: step 1/1.</text>
</comment>
<comment type="subunit">
    <text evidence="1">Homomer.</text>
</comment>
<comment type="similarity">
    <text evidence="1">Belongs to the GTP cyclohydrolase I family.</text>
</comment>
<accession>B7IP89</accession>
<reference key="1">
    <citation type="submission" date="2008-10" db="EMBL/GenBank/DDBJ databases">
        <title>Genome sequence of Bacillus cereus G9842.</title>
        <authorList>
            <person name="Dodson R.J."/>
            <person name="Durkin A.S."/>
            <person name="Rosovitz M.J."/>
            <person name="Rasko D.A."/>
            <person name="Hoffmaster A."/>
            <person name="Ravel J."/>
            <person name="Sutton G."/>
        </authorList>
    </citation>
    <scope>NUCLEOTIDE SEQUENCE [LARGE SCALE GENOMIC DNA]</scope>
    <source>
        <strain>G9842</strain>
    </source>
</reference>
<organism>
    <name type="scientific">Bacillus cereus (strain G9842)</name>
    <dbReference type="NCBI Taxonomy" id="405531"/>
    <lineage>
        <taxon>Bacteria</taxon>
        <taxon>Bacillati</taxon>
        <taxon>Bacillota</taxon>
        <taxon>Bacilli</taxon>
        <taxon>Bacillales</taxon>
        <taxon>Bacillaceae</taxon>
        <taxon>Bacillus</taxon>
        <taxon>Bacillus cereus group</taxon>
    </lineage>
</organism>
<feature type="chain" id="PRO_1000190071" description="GTP cyclohydrolase 1">
    <location>
        <begin position="1"/>
        <end position="189"/>
    </location>
</feature>
<feature type="binding site" evidence="1">
    <location>
        <position position="78"/>
    </location>
    <ligand>
        <name>Zn(2+)</name>
        <dbReference type="ChEBI" id="CHEBI:29105"/>
    </ligand>
</feature>
<feature type="binding site" evidence="1">
    <location>
        <position position="81"/>
    </location>
    <ligand>
        <name>Zn(2+)</name>
        <dbReference type="ChEBI" id="CHEBI:29105"/>
    </ligand>
</feature>
<feature type="binding site" evidence="1">
    <location>
        <position position="150"/>
    </location>
    <ligand>
        <name>Zn(2+)</name>
        <dbReference type="ChEBI" id="CHEBI:29105"/>
    </ligand>
</feature>
<sequence>MAKVNLEQIEHAVRLILEAIGDDPNREGVLDTPKRVAKMYAEVFSGMHEDPKEHLHKVFGEDHEELVLVKDIPFYSMCEHHLVPFYGVAHVAYIPQGGKVTGLSKLARTVDTIARRPQLQERITSTVANSIMEVLEPHGVMVVVEAEHMCMTMRGVKKPGAKTVTTAVRGVLENDAAARSEILSFIKTK</sequence>
<evidence type="ECO:0000255" key="1">
    <source>
        <dbReference type="HAMAP-Rule" id="MF_00223"/>
    </source>
</evidence>
<keyword id="KW-0378">Hydrolase</keyword>
<keyword id="KW-0479">Metal-binding</keyword>
<keyword id="KW-0554">One-carbon metabolism</keyword>
<keyword id="KW-0862">Zinc</keyword>
<name>GCH1_BACC2</name>
<dbReference type="EC" id="3.5.4.16" evidence="1"/>
<dbReference type="EMBL" id="CP001186">
    <property type="protein sequence ID" value="ACK94099.1"/>
    <property type="molecule type" value="Genomic_DNA"/>
</dbReference>
<dbReference type="RefSeq" id="WP_001151482.1">
    <property type="nucleotide sequence ID" value="NC_011772.1"/>
</dbReference>
<dbReference type="SMR" id="B7IP89"/>
<dbReference type="GeneID" id="93009529"/>
<dbReference type="KEGG" id="bcg:BCG9842_B3778"/>
<dbReference type="HOGENOM" id="CLU_049768_3_3_9"/>
<dbReference type="UniPathway" id="UPA00848">
    <property type="reaction ID" value="UER00151"/>
</dbReference>
<dbReference type="Proteomes" id="UP000006744">
    <property type="component" value="Chromosome"/>
</dbReference>
<dbReference type="GO" id="GO:0005737">
    <property type="term" value="C:cytoplasm"/>
    <property type="evidence" value="ECO:0007669"/>
    <property type="project" value="TreeGrafter"/>
</dbReference>
<dbReference type="GO" id="GO:0005525">
    <property type="term" value="F:GTP binding"/>
    <property type="evidence" value="ECO:0007669"/>
    <property type="project" value="TreeGrafter"/>
</dbReference>
<dbReference type="GO" id="GO:0003934">
    <property type="term" value="F:GTP cyclohydrolase I activity"/>
    <property type="evidence" value="ECO:0007669"/>
    <property type="project" value="UniProtKB-UniRule"/>
</dbReference>
<dbReference type="GO" id="GO:0008270">
    <property type="term" value="F:zinc ion binding"/>
    <property type="evidence" value="ECO:0007669"/>
    <property type="project" value="UniProtKB-UniRule"/>
</dbReference>
<dbReference type="GO" id="GO:0006730">
    <property type="term" value="P:one-carbon metabolic process"/>
    <property type="evidence" value="ECO:0007669"/>
    <property type="project" value="UniProtKB-UniRule"/>
</dbReference>
<dbReference type="GO" id="GO:0006729">
    <property type="term" value="P:tetrahydrobiopterin biosynthetic process"/>
    <property type="evidence" value="ECO:0007669"/>
    <property type="project" value="TreeGrafter"/>
</dbReference>
<dbReference type="GO" id="GO:0046654">
    <property type="term" value="P:tetrahydrofolate biosynthetic process"/>
    <property type="evidence" value="ECO:0007669"/>
    <property type="project" value="UniProtKB-UniRule"/>
</dbReference>
<dbReference type="CDD" id="cd00642">
    <property type="entry name" value="GTP_cyclohydro1"/>
    <property type="match status" value="1"/>
</dbReference>
<dbReference type="FunFam" id="1.10.286.10:FF:000001">
    <property type="entry name" value="GTP cyclohydrolase 1"/>
    <property type="match status" value="1"/>
</dbReference>
<dbReference type="FunFam" id="3.30.1130.10:FF:000001">
    <property type="entry name" value="GTP cyclohydrolase 1"/>
    <property type="match status" value="1"/>
</dbReference>
<dbReference type="Gene3D" id="1.10.286.10">
    <property type="match status" value="1"/>
</dbReference>
<dbReference type="Gene3D" id="3.30.1130.10">
    <property type="match status" value="1"/>
</dbReference>
<dbReference type="HAMAP" id="MF_00223">
    <property type="entry name" value="FolE"/>
    <property type="match status" value="1"/>
</dbReference>
<dbReference type="InterPro" id="IPR043133">
    <property type="entry name" value="GTP-CH-I_C/QueF"/>
</dbReference>
<dbReference type="InterPro" id="IPR043134">
    <property type="entry name" value="GTP-CH-I_N"/>
</dbReference>
<dbReference type="InterPro" id="IPR001474">
    <property type="entry name" value="GTP_CycHdrlase_I"/>
</dbReference>
<dbReference type="InterPro" id="IPR018234">
    <property type="entry name" value="GTP_CycHdrlase_I_CS"/>
</dbReference>
<dbReference type="InterPro" id="IPR020602">
    <property type="entry name" value="GTP_CycHdrlase_I_dom"/>
</dbReference>
<dbReference type="NCBIfam" id="TIGR00063">
    <property type="entry name" value="folE"/>
    <property type="match status" value="1"/>
</dbReference>
<dbReference type="NCBIfam" id="NF006825">
    <property type="entry name" value="PRK09347.1-2"/>
    <property type="match status" value="1"/>
</dbReference>
<dbReference type="NCBIfam" id="NF006826">
    <property type="entry name" value="PRK09347.1-3"/>
    <property type="match status" value="1"/>
</dbReference>
<dbReference type="PANTHER" id="PTHR11109:SF7">
    <property type="entry name" value="GTP CYCLOHYDROLASE 1"/>
    <property type="match status" value="1"/>
</dbReference>
<dbReference type="PANTHER" id="PTHR11109">
    <property type="entry name" value="GTP CYCLOHYDROLASE I"/>
    <property type="match status" value="1"/>
</dbReference>
<dbReference type="Pfam" id="PF01227">
    <property type="entry name" value="GTP_cyclohydroI"/>
    <property type="match status" value="1"/>
</dbReference>
<dbReference type="SUPFAM" id="SSF55620">
    <property type="entry name" value="Tetrahydrobiopterin biosynthesis enzymes-like"/>
    <property type="match status" value="1"/>
</dbReference>
<dbReference type="PROSITE" id="PS00859">
    <property type="entry name" value="GTP_CYCLOHYDROL_1_1"/>
    <property type="match status" value="1"/>
</dbReference>
<dbReference type="PROSITE" id="PS00860">
    <property type="entry name" value="GTP_CYCLOHYDROL_1_2"/>
    <property type="match status" value="1"/>
</dbReference>
<proteinExistence type="inferred from homology"/>
<protein>
    <recommendedName>
        <fullName evidence="1">GTP cyclohydrolase 1</fullName>
        <ecNumber evidence="1">3.5.4.16</ecNumber>
    </recommendedName>
    <alternativeName>
        <fullName evidence="1">GTP cyclohydrolase I</fullName>
        <shortName evidence="1">GTP-CH-I</shortName>
    </alternativeName>
</protein>
<gene>
    <name evidence="1" type="primary">folE</name>
    <name type="ordered locus">BCG9842_B3778</name>
</gene>